<proteinExistence type="inferred from homology"/>
<reference key="1">
    <citation type="journal article" date="2006" name="Lancet">
        <title>Complete genome sequence of USA300, an epidemic clone of community-acquired meticillin-resistant Staphylococcus aureus.</title>
        <authorList>
            <person name="Diep B.A."/>
            <person name="Gill S.R."/>
            <person name="Chang R.F."/>
            <person name="Phan T.H."/>
            <person name="Chen J.H."/>
            <person name="Davidson M.G."/>
            <person name="Lin F."/>
            <person name="Lin J."/>
            <person name="Carleton H.A."/>
            <person name="Mongodin E.F."/>
            <person name="Sensabaugh G.F."/>
            <person name="Perdreau-Remington F."/>
        </authorList>
    </citation>
    <scope>NUCLEOTIDE SEQUENCE [LARGE SCALE GENOMIC DNA]</scope>
    <source>
        <strain>USA300</strain>
    </source>
</reference>
<protein>
    <recommendedName>
        <fullName evidence="1">GTPase Era</fullName>
    </recommendedName>
</protein>
<name>ERA_STAA3</name>
<evidence type="ECO:0000255" key="1">
    <source>
        <dbReference type="HAMAP-Rule" id="MF_00367"/>
    </source>
</evidence>
<evidence type="ECO:0000255" key="2">
    <source>
        <dbReference type="PROSITE-ProRule" id="PRU01050"/>
    </source>
</evidence>
<comment type="function">
    <text evidence="1">An essential GTPase that binds both GDP and GTP, with rapid nucleotide exchange. Plays a role in 16S rRNA processing and 30S ribosomal subunit biogenesis and possibly also in cell cycle regulation and energy metabolism.</text>
</comment>
<comment type="subunit">
    <text evidence="1">Monomer.</text>
</comment>
<comment type="subcellular location">
    <subcellularLocation>
        <location>Cytoplasm</location>
    </subcellularLocation>
    <subcellularLocation>
        <location evidence="1">Cell membrane</location>
        <topology evidence="1">Peripheral membrane protein</topology>
    </subcellularLocation>
</comment>
<comment type="similarity">
    <text evidence="1 2">Belongs to the TRAFAC class TrmE-Era-EngA-EngB-Septin-like GTPase superfamily. Era GTPase family.</text>
</comment>
<keyword id="KW-1003">Cell membrane</keyword>
<keyword id="KW-0963">Cytoplasm</keyword>
<keyword id="KW-0342">GTP-binding</keyword>
<keyword id="KW-0472">Membrane</keyword>
<keyword id="KW-0547">Nucleotide-binding</keyword>
<keyword id="KW-0690">Ribosome biogenesis</keyword>
<keyword id="KW-0694">RNA-binding</keyword>
<keyword id="KW-0699">rRNA-binding</keyword>
<sequence length="299" mass="34329">MTEHKSGFVSIIGRPNVGKSTFVNRVIGHKIAIMSDKAQTTRNKIQGVMTRDDAQIIFIDTPGIHKPKHKLGDYMMKVAKNTLSEIDAIMFMVNANEEIGRGDEYIIEMLKNVKTPVFLVLNKIDLVHPDELMPKIEEYQSYMDFTEIVPISALEGLNVDHFIDVLKTYLPEGPKYYPDDQISDHPEQFVVGEIIREKILHLTSEEIPHAIGVNVDRMVKESEDRVHIEATIYVERDSQKGIVIGKGGKKLKEVGKRARRDIEMLLGSKVYLELWVKVQRDWRNKVNFIRQIGYVEDQD</sequence>
<gene>
    <name evidence="1" type="primary">era</name>
    <name type="ordered locus">SAUSA300_1527</name>
</gene>
<feature type="chain" id="PRO_1000079742" description="GTPase Era">
    <location>
        <begin position="1"/>
        <end position="299"/>
    </location>
</feature>
<feature type="domain" description="Era-type G" evidence="2">
    <location>
        <begin position="5"/>
        <end position="172"/>
    </location>
</feature>
<feature type="domain" description="KH type-2" evidence="1">
    <location>
        <begin position="203"/>
        <end position="280"/>
    </location>
</feature>
<feature type="region of interest" description="G1" evidence="2">
    <location>
        <begin position="13"/>
        <end position="20"/>
    </location>
</feature>
<feature type="region of interest" description="G2" evidence="2">
    <location>
        <begin position="39"/>
        <end position="43"/>
    </location>
</feature>
<feature type="region of interest" description="G3" evidence="2">
    <location>
        <begin position="60"/>
        <end position="63"/>
    </location>
</feature>
<feature type="region of interest" description="G4" evidence="2">
    <location>
        <begin position="122"/>
        <end position="125"/>
    </location>
</feature>
<feature type="region of interest" description="G5" evidence="2">
    <location>
        <begin position="151"/>
        <end position="153"/>
    </location>
</feature>
<feature type="binding site" evidence="1">
    <location>
        <begin position="13"/>
        <end position="20"/>
    </location>
    <ligand>
        <name>GTP</name>
        <dbReference type="ChEBI" id="CHEBI:37565"/>
    </ligand>
</feature>
<feature type="binding site" evidence="1">
    <location>
        <begin position="60"/>
        <end position="64"/>
    </location>
    <ligand>
        <name>GTP</name>
        <dbReference type="ChEBI" id="CHEBI:37565"/>
    </ligand>
</feature>
<feature type="binding site" evidence="1">
    <location>
        <begin position="122"/>
        <end position="125"/>
    </location>
    <ligand>
        <name>GTP</name>
        <dbReference type="ChEBI" id="CHEBI:37565"/>
    </ligand>
</feature>
<accession>Q2FGF6</accession>
<dbReference type="EMBL" id="CP000255">
    <property type="protein sequence ID" value="ABD21726.1"/>
    <property type="molecule type" value="Genomic_DNA"/>
</dbReference>
<dbReference type="RefSeq" id="WP_000134765.1">
    <property type="nucleotide sequence ID" value="NZ_CP027476.1"/>
</dbReference>
<dbReference type="SMR" id="Q2FGF6"/>
<dbReference type="KEGG" id="saa:SAUSA300_1527"/>
<dbReference type="HOGENOM" id="CLU_038009_1_0_9"/>
<dbReference type="OMA" id="WAEVDVI"/>
<dbReference type="Proteomes" id="UP000001939">
    <property type="component" value="Chromosome"/>
</dbReference>
<dbReference type="GO" id="GO:0005829">
    <property type="term" value="C:cytosol"/>
    <property type="evidence" value="ECO:0007669"/>
    <property type="project" value="TreeGrafter"/>
</dbReference>
<dbReference type="GO" id="GO:0005886">
    <property type="term" value="C:plasma membrane"/>
    <property type="evidence" value="ECO:0007669"/>
    <property type="project" value="UniProtKB-SubCell"/>
</dbReference>
<dbReference type="GO" id="GO:0005525">
    <property type="term" value="F:GTP binding"/>
    <property type="evidence" value="ECO:0007669"/>
    <property type="project" value="UniProtKB-UniRule"/>
</dbReference>
<dbReference type="GO" id="GO:0003924">
    <property type="term" value="F:GTPase activity"/>
    <property type="evidence" value="ECO:0007669"/>
    <property type="project" value="UniProtKB-UniRule"/>
</dbReference>
<dbReference type="GO" id="GO:0043024">
    <property type="term" value="F:ribosomal small subunit binding"/>
    <property type="evidence" value="ECO:0007669"/>
    <property type="project" value="TreeGrafter"/>
</dbReference>
<dbReference type="GO" id="GO:0070181">
    <property type="term" value="F:small ribosomal subunit rRNA binding"/>
    <property type="evidence" value="ECO:0007669"/>
    <property type="project" value="UniProtKB-UniRule"/>
</dbReference>
<dbReference type="GO" id="GO:0000028">
    <property type="term" value="P:ribosomal small subunit assembly"/>
    <property type="evidence" value="ECO:0007669"/>
    <property type="project" value="TreeGrafter"/>
</dbReference>
<dbReference type="CDD" id="cd04163">
    <property type="entry name" value="Era"/>
    <property type="match status" value="1"/>
</dbReference>
<dbReference type="CDD" id="cd22534">
    <property type="entry name" value="KH-II_Era"/>
    <property type="match status" value="1"/>
</dbReference>
<dbReference type="FunFam" id="3.30.300.20:FF:000003">
    <property type="entry name" value="GTPase Era"/>
    <property type="match status" value="1"/>
</dbReference>
<dbReference type="FunFam" id="3.40.50.300:FF:000094">
    <property type="entry name" value="GTPase Era"/>
    <property type="match status" value="1"/>
</dbReference>
<dbReference type="Gene3D" id="3.30.300.20">
    <property type="match status" value="1"/>
</dbReference>
<dbReference type="Gene3D" id="3.40.50.300">
    <property type="entry name" value="P-loop containing nucleotide triphosphate hydrolases"/>
    <property type="match status" value="1"/>
</dbReference>
<dbReference type="HAMAP" id="MF_00367">
    <property type="entry name" value="GTPase_Era"/>
    <property type="match status" value="1"/>
</dbReference>
<dbReference type="InterPro" id="IPR030388">
    <property type="entry name" value="G_ERA_dom"/>
</dbReference>
<dbReference type="InterPro" id="IPR006073">
    <property type="entry name" value="GTP-bd"/>
</dbReference>
<dbReference type="InterPro" id="IPR005662">
    <property type="entry name" value="GTPase_Era-like"/>
</dbReference>
<dbReference type="InterPro" id="IPR015946">
    <property type="entry name" value="KH_dom-like_a/b"/>
</dbReference>
<dbReference type="InterPro" id="IPR004044">
    <property type="entry name" value="KH_dom_type_2"/>
</dbReference>
<dbReference type="InterPro" id="IPR009019">
    <property type="entry name" value="KH_sf_prok-type"/>
</dbReference>
<dbReference type="InterPro" id="IPR027417">
    <property type="entry name" value="P-loop_NTPase"/>
</dbReference>
<dbReference type="InterPro" id="IPR005225">
    <property type="entry name" value="Small_GTP-bd"/>
</dbReference>
<dbReference type="NCBIfam" id="TIGR00436">
    <property type="entry name" value="era"/>
    <property type="match status" value="1"/>
</dbReference>
<dbReference type="NCBIfam" id="NF000908">
    <property type="entry name" value="PRK00089.1"/>
    <property type="match status" value="1"/>
</dbReference>
<dbReference type="NCBIfam" id="TIGR00231">
    <property type="entry name" value="small_GTP"/>
    <property type="match status" value="1"/>
</dbReference>
<dbReference type="PANTHER" id="PTHR42698">
    <property type="entry name" value="GTPASE ERA"/>
    <property type="match status" value="1"/>
</dbReference>
<dbReference type="PANTHER" id="PTHR42698:SF1">
    <property type="entry name" value="GTPASE ERA, MITOCHONDRIAL"/>
    <property type="match status" value="1"/>
</dbReference>
<dbReference type="Pfam" id="PF07650">
    <property type="entry name" value="KH_2"/>
    <property type="match status" value="1"/>
</dbReference>
<dbReference type="Pfam" id="PF01926">
    <property type="entry name" value="MMR_HSR1"/>
    <property type="match status" value="1"/>
</dbReference>
<dbReference type="SUPFAM" id="SSF52540">
    <property type="entry name" value="P-loop containing nucleoside triphosphate hydrolases"/>
    <property type="match status" value="1"/>
</dbReference>
<dbReference type="SUPFAM" id="SSF54814">
    <property type="entry name" value="Prokaryotic type KH domain (KH-domain type II)"/>
    <property type="match status" value="1"/>
</dbReference>
<dbReference type="PROSITE" id="PS51713">
    <property type="entry name" value="G_ERA"/>
    <property type="match status" value="1"/>
</dbReference>
<dbReference type="PROSITE" id="PS50823">
    <property type="entry name" value="KH_TYPE_2"/>
    <property type="match status" value="1"/>
</dbReference>
<organism>
    <name type="scientific">Staphylococcus aureus (strain USA300)</name>
    <dbReference type="NCBI Taxonomy" id="367830"/>
    <lineage>
        <taxon>Bacteria</taxon>
        <taxon>Bacillati</taxon>
        <taxon>Bacillota</taxon>
        <taxon>Bacilli</taxon>
        <taxon>Bacillales</taxon>
        <taxon>Staphylococcaceae</taxon>
        <taxon>Staphylococcus</taxon>
    </lineage>
</organism>